<organism>
    <name type="scientific">Homo sapiens</name>
    <name type="common">Human</name>
    <dbReference type="NCBI Taxonomy" id="9606"/>
    <lineage>
        <taxon>Eukaryota</taxon>
        <taxon>Metazoa</taxon>
        <taxon>Chordata</taxon>
        <taxon>Craniata</taxon>
        <taxon>Vertebrata</taxon>
        <taxon>Euteleostomi</taxon>
        <taxon>Mammalia</taxon>
        <taxon>Eutheria</taxon>
        <taxon>Euarchontoglires</taxon>
        <taxon>Primates</taxon>
        <taxon>Haplorrhini</taxon>
        <taxon>Catarrhini</taxon>
        <taxon>Hominidae</taxon>
        <taxon>Homo</taxon>
    </lineage>
</organism>
<protein>
    <recommendedName>
        <fullName>Disks large homolog 2</fullName>
    </recommendedName>
    <alternativeName>
        <fullName>Channel-associated protein of synapse-110</fullName>
        <shortName>Chapsyn-110</shortName>
    </alternativeName>
    <alternativeName>
        <fullName>Postsynaptic density protein PSD-93</fullName>
    </alternativeName>
</protein>
<feature type="chain" id="PRO_0000094553" description="Disks large homolog 2">
    <location>
        <begin position="1"/>
        <end position="870"/>
    </location>
</feature>
<feature type="domain" description="PDZ 1" evidence="5">
    <location>
        <begin position="98"/>
        <end position="184"/>
    </location>
</feature>
<feature type="domain" description="PDZ 2" evidence="5">
    <location>
        <begin position="193"/>
        <end position="279"/>
    </location>
</feature>
<feature type="domain" description="PDZ 3" evidence="5">
    <location>
        <begin position="421"/>
        <end position="501"/>
    </location>
</feature>
<feature type="domain" description="SH3" evidence="6">
    <location>
        <begin position="536"/>
        <end position="606"/>
    </location>
</feature>
<feature type="domain" description="Guanylate kinase-like" evidence="4">
    <location>
        <begin position="680"/>
        <end position="855"/>
    </location>
</feature>
<feature type="modified residue" description="Phosphoserine" evidence="3">
    <location>
        <position position="28"/>
    </location>
</feature>
<feature type="modified residue" description="Phosphotyrosine" evidence="3">
    <location>
        <position position="58"/>
    </location>
</feature>
<feature type="modified residue" description="Phosphoserine" evidence="3">
    <location>
        <position position="65"/>
    </location>
</feature>
<feature type="modified residue" description="Phosphoserine" evidence="3">
    <location>
        <position position="307"/>
    </location>
</feature>
<feature type="modified residue" description="Phosphoserine" evidence="3">
    <location>
        <position position="328"/>
    </location>
</feature>
<feature type="modified residue" description="Phosphoserine" evidence="2">
    <location>
        <position position="360"/>
    </location>
</feature>
<feature type="modified residue" description="Phosphoserine" evidence="3">
    <location>
        <position position="365"/>
    </location>
</feature>
<feature type="modified residue" description="Phosphoserine" evidence="2">
    <location>
        <position position="406"/>
    </location>
</feature>
<feature type="modified residue" description="Phosphoserine" evidence="3">
    <location>
        <position position="414"/>
    </location>
</feature>
<feature type="modified residue" description="Phosphotyrosine" evidence="3">
    <location>
        <position position="505"/>
    </location>
</feature>
<feature type="modified residue" description="Phosphoserine" evidence="2">
    <location>
        <position position="528"/>
    </location>
</feature>
<feature type="modified residue" description="Phosphoserine" evidence="2">
    <location>
        <position position="530"/>
    </location>
</feature>
<feature type="modified residue" description="Phosphoserine" evidence="3">
    <location>
        <position position="553"/>
    </location>
</feature>
<feature type="modified residue" description="Phosphoserine" evidence="14">
    <location>
        <position position="627"/>
    </location>
</feature>
<feature type="modified residue" description="Phosphoserine" evidence="14">
    <location>
        <position position="635"/>
    </location>
</feature>
<feature type="modified residue" description="Phosphotyrosine" evidence="3">
    <location>
        <position position="750"/>
    </location>
</feature>
<feature type="modified residue" description="Phosphotyrosine" evidence="3">
    <location>
        <position position="755"/>
    </location>
</feature>
<feature type="lipid moiety-binding region" description="S-palmitoyl cysteine" evidence="1">
    <location>
        <position position="5"/>
    </location>
</feature>
<feature type="lipid moiety-binding region" description="S-palmitoyl cysteine" evidence="1">
    <location>
        <position position="7"/>
    </location>
</feature>
<feature type="splice variant" id="VSP_045634" description="In isoform 5." evidence="12">
    <location>
        <begin position="1"/>
        <end position="518"/>
    </location>
</feature>
<feature type="splice variant" id="VSP_015511" description="In isoform 4." evidence="13">
    <original>MFFACYCALRTNVKKYRYQDEDAPHDHSLPRLTHEVRGPELVHVSEKNLSQIENVHGYVLQSHISPLK</original>
    <variation>MNAYLTKQHSCSRGSDGMDAVRSAPTLIRDAHCACGWQRNCQGLGYSSQTMPSSGPGGPASNRTGGSSFNRTLWDSVRKSPHKTSTKGKGTCGEHCTCPHGWFSPAQ</variation>
    <location>
        <begin position="1"/>
        <end position="68"/>
    </location>
</feature>
<feature type="splice variant" id="VSP_015512" description="In isoform 3." evidence="11">
    <location>
        <begin position="1"/>
        <end position="51"/>
    </location>
</feature>
<feature type="splice variant" id="VSP_015513" description="In isoform 2." evidence="12">
    <original>MFFACYCALRTNVK</original>
    <variation>MGIFKSSLFQALLDIQEFYEVTLLNSQKSCEQKIEEANQVLQKWEKTSLLAPCHDRLQKSSELTDCSGSKENASCIEQNKENQSFENETDETTTQNQGRCPAQNCSVEAPAWMPVHHCT</variation>
    <location>
        <begin position="1"/>
        <end position="14"/>
    </location>
</feature>
<feature type="splice variant" id="VSP_015514" description="In isoform 3." evidence="11">
    <original>IENVHGYVLQSHISPLKASPAPIIVNTDTLDTIPY</original>
    <variation>MQRPSVSRAENYQLLWDTIASLKQCEQAMQHAFIP</variation>
    <location>
        <begin position="52"/>
        <end position="86"/>
    </location>
</feature>
<feature type="splice variant" id="VSP_015515" description="In isoform 3." evidence="11">
    <location>
        <begin position="341"/>
        <end position="392"/>
    </location>
</feature>
<feature type="splice variant" id="VSP_015516" description="In isoform 3 and isoform 5." evidence="11 12">
    <original>SFNDKRKKSFIFSRKFPFYKNKEQSEQETSDPE</original>
    <variation>DIPGLGDDGYGTKTL</variation>
    <location>
        <begin position="627"/>
        <end position="659"/>
    </location>
</feature>
<feature type="sequence conflict" description="In Ref. 1; AAB04949." evidence="13" ref="1">
    <original>V</original>
    <variation>A</variation>
    <location>
        <position position="177"/>
    </location>
</feature>
<feature type="sequence conflict" description="In Ref. 1; AAB04949." evidence="13" ref="1">
    <original>K</original>
    <variation>N</variation>
    <location>
        <position position="278"/>
    </location>
</feature>
<feature type="sequence conflict" description="In Ref. 3; CAI45970." evidence="13" ref="3">
    <original>K</original>
    <variation>E</variation>
    <location>
        <position position="704"/>
    </location>
</feature>
<feature type="sequence conflict" description="In Ref. 1; AAB04949." evidence="13" ref="1">
    <original>P</original>
    <variation>S</variation>
    <location>
        <position position="803"/>
    </location>
</feature>
<feature type="sequence conflict" description="In Ref. 3; CAH18680." evidence="13" ref="3">
    <original>F</original>
    <variation>L</variation>
    <location>
        <position position="861"/>
    </location>
</feature>
<feature type="strand" evidence="15">
    <location>
        <begin position="190"/>
        <end position="197"/>
    </location>
</feature>
<feature type="strand" evidence="15">
    <location>
        <begin position="202"/>
        <end position="209"/>
    </location>
</feature>
<feature type="strand" evidence="15">
    <location>
        <begin position="222"/>
        <end position="227"/>
    </location>
</feature>
<feature type="helix" evidence="15">
    <location>
        <begin position="232"/>
        <end position="236"/>
    </location>
</feature>
<feature type="strand" evidence="15">
    <location>
        <begin position="244"/>
        <end position="248"/>
    </location>
</feature>
<feature type="helix" evidence="15">
    <location>
        <begin position="258"/>
        <end position="266"/>
    </location>
</feature>
<feature type="strand" evidence="15">
    <location>
        <begin position="270"/>
        <end position="281"/>
    </location>
</feature>
<feature type="strand" evidence="16">
    <location>
        <begin position="420"/>
        <end position="425"/>
    </location>
</feature>
<feature type="strand" evidence="16">
    <location>
        <begin position="432"/>
        <end position="439"/>
    </location>
</feature>
<feature type="strand" evidence="16">
    <location>
        <begin position="444"/>
        <end position="449"/>
    </location>
</feature>
<feature type="helix" evidence="16">
    <location>
        <begin position="454"/>
        <end position="458"/>
    </location>
</feature>
<feature type="strand" evidence="16">
    <location>
        <begin position="465"/>
        <end position="470"/>
    </location>
</feature>
<feature type="helix" evidence="16">
    <location>
        <begin position="480"/>
        <end position="489"/>
    </location>
</feature>
<feature type="strand" evidence="16">
    <location>
        <begin position="492"/>
        <end position="500"/>
    </location>
</feature>
<feature type="helix" evidence="16">
    <location>
        <begin position="502"/>
        <end position="510"/>
    </location>
</feature>
<feature type="sequence conflict" description="In Ref. 3; CAI45970." evidence="13" ref="3">
    <original>D</original>
    <variation>E</variation>
    <location sequence="Q15700-5">
        <position position="116"/>
    </location>
</feature>
<reference key="1">
    <citation type="journal article" date="1996" name="Neuron">
        <title>Heteromultimerization and NMDA receptor-clustering activity of Chapsyn-110, a member of the PSD-95 family of proteins.</title>
        <authorList>
            <person name="Kim E."/>
            <person name="Cho K.-O."/>
            <person name="Rothschild A."/>
            <person name="Sheng M."/>
        </authorList>
    </citation>
    <scope>NUCLEOTIDE SEQUENCE [MRNA] (ISOFORM 1)</scope>
    <source>
        <tissue>Brain</tissue>
    </source>
</reference>
<reference key="2">
    <citation type="journal article" date="2004" name="Nat. Genet.">
        <title>Complete sequencing and characterization of 21,243 full-length human cDNAs.</title>
        <authorList>
            <person name="Ota T."/>
            <person name="Suzuki Y."/>
            <person name="Nishikawa T."/>
            <person name="Otsuki T."/>
            <person name="Sugiyama T."/>
            <person name="Irie R."/>
            <person name="Wakamatsu A."/>
            <person name="Hayashi K."/>
            <person name="Sato H."/>
            <person name="Nagai K."/>
            <person name="Kimura K."/>
            <person name="Makita H."/>
            <person name="Sekine M."/>
            <person name="Obayashi M."/>
            <person name="Nishi T."/>
            <person name="Shibahara T."/>
            <person name="Tanaka T."/>
            <person name="Ishii S."/>
            <person name="Yamamoto J."/>
            <person name="Saito K."/>
            <person name="Kawai Y."/>
            <person name="Isono Y."/>
            <person name="Nakamura Y."/>
            <person name="Nagahari K."/>
            <person name="Murakami K."/>
            <person name="Yasuda T."/>
            <person name="Iwayanagi T."/>
            <person name="Wagatsuma M."/>
            <person name="Shiratori A."/>
            <person name="Sudo H."/>
            <person name="Hosoiri T."/>
            <person name="Kaku Y."/>
            <person name="Kodaira H."/>
            <person name="Kondo H."/>
            <person name="Sugawara M."/>
            <person name="Takahashi M."/>
            <person name="Kanda K."/>
            <person name="Yokoi T."/>
            <person name="Furuya T."/>
            <person name="Kikkawa E."/>
            <person name="Omura Y."/>
            <person name="Abe K."/>
            <person name="Kamihara K."/>
            <person name="Katsuta N."/>
            <person name="Sato K."/>
            <person name="Tanikawa M."/>
            <person name="Yamazaki M."/>
            <person name="Ninomiya K."/>
            <person name="Ishibashi T."/>
            <person name="Yamashita H."/>
            <person name="Murakawa K."/>
            <person name="Fujimori K."/>
            <person name="Tanai H."/>
            <person name="Kimata M."/>
            <person name="Watanabe M."/>
            <person name="Hiraoka S."/>
            <person name="Chiba Y."/>
            <person name="Ishida S."/>
            <person name="Ono Y."/>
            <person name="Takiguchi S."/>
            <person name="Watanabe S."/>
            <person name="Yosida M."/>
            <person name="Hotuta T."/>
            <person name="Kusano J."/>
            <person name="Kanehori K."/>
            <person name="Takahashi-Fujii A."/>
            <person name="Hara H."/>
            <person name="Tanase T.-O."/>
            <person name="Nomura Y."/>
            <person name="Togiya S."/>
            <person name="Komai F."/>
            <person name="Hara R."/>
            <person name="Takeuchi K."/>
            <person name="Arita M."/>
            <person name="Imose N."/>
            <person name="Musashino K."/>
            <person name="Yuuki H."/>
            <person name="Oshima A."/>
            <person name="Sasaki N."/>
            <person name="Aotsuka S."/>
            <person name="Yoshikawa Y."/>
            <person name="Matsunawa H."/>
            <person name="Ichihara T."/>
            <person name="Shiohata N."/>
            <person name="Sano S."/>
            <person name="Moriya S."/>
            <person name="Momiyama H."/>
            <person name="Satoh N."/>
            <person name="Takami S."/>
            <person name="Terashima Y."/>
            <person name="Suzuki O."/>
            <person name="Nakagawa S."/>
            <person name="Senoh A."/>
            <person name="Mizoguchi H."/>
            <person name="Goto Y."/>
            <person name="Shimizu F."/>
            <person name="Wakebe H."/>
            <person name="Hishigaki H."/>
            <person name="Watanabe T."/>
            <person name="Sugiyama A."/>
            <person name="Takemoto M."/>
            <person name="Kawakami B."/>
            <person name="Yamazaki M."/>
            <person name="Watanabe K."/>
            <person name="Kumagai A."/>
            <person name="Itakura S."/>
            <person name="Fukuzumi Y."/>
            <person name="Fujimori Y."/>
            <person name="Komiyama M."/>
            <person name="Tashiro H."/>
            <person name="Tanigami A."/>
            <person name="Fujiwara T."/>
            <person name="Ono T."/>
            <person name="Yamada K."/>
            <person name="Fujii Y."/>
            <person name="Ozaki K."/>
            <person name="Hirao M."/>
            <person name="Ohmori Y."/>
            <person name="Kawabata A."/>
            <person name="Hikiji T."/>
            <person name="Kobatake N."/>
            <person name="Inagaki H."/>
            <person name="Ikema Y."/>
            <person name="Okamoto S."/>
            <person name="Okitani R."/>
            <person name="Kawakami T."/>
            <person name="Noguchi S."/>
            <person name="Itoh T."/>
            <person name="Shigeta K."/>
            <person name="Senba T."/>
            <person name="Matsumura K."/>
            <person name="Nakajima Y."/>
            <person name="Mizuno T."/>
            <person name="Morinaga M."/>
            <person name="Sasaki M."/>
            <person name="Togashi T."/>
            <person name="Oyama M."/>
            <person name="Hata H."/>
            <person name="Watanabe M."/>
            <person name="Komatsu T."/>
            <person name="Mizushima-Sugano J."/>
            <person name="Satoh T."/>
            <person name="Shirai Y."/>
            <person name="Takahashi Y."/>
            <person name="Nakagawa K."/>
            <person name="Okumura K."/>
            <person name="Nagase T."/>
            <person name="Nomura N."/>
            <person name="Kikuchi H."/>
            <person name="Masuho Y."/>
            <person name="Yamashita R."/>
            <person name="Nakai K."/>
            <person name="Yada T."/>
            <person name="Nakamura Y."/>
            <person name="Ohara O."/>
            <person name="Isogai T."/>
            <person name="Sugano S."/>
        </authorList>
    </citation>
    <scope>NUCLEOTIDE SEQUENCE [LARGE SCALE MRNA] (ISOFORM 3)</scope>
    <source>
        <tissue>Cerebellum</tissue>
    </source>
</reference>
<reference key="3">
    <citation type="journal article" date="2007" name="BMC Genomics">
        <title>The full-ORF clone resource of the German cDNA consortium.</title>
        <authorList>
            <person name="Bechtel S."/>
            <person name="Rosenfelder H."/>
            <person name="Duda A."/>
            <person name="Schmidt C.P."/>
            <person name="Ernst U."/>
            <person name="Wellenreuther R."/>
            <person name="Mehrle A."/>
            <person name="Schuster C."/>
            <person name="Bahr A."/>
            <person name="Bloecker H."/>
            <person name="Heubner D."/>
            <person name="Hoerlein A."/>
            <person name="Michel G."/>
            <person name="Wedler H."/>
            <person name="Koehrer K."/>
            <person name="Ottenwaelder B."/>
            <person name="Poustka A."/>
            <person name="Wiemann S."/>
            <person name="Schupp I."/>
        </authorList>
    </citation>
    <scope>NUCLEOTIDE SEQUENCE [LARGE SCALE MRNA] (ISOFORMS 2 AND 5)</scope>
    <source>
        <tissue>Retina</tissue>
    </source>
</reference>
<reference key="4">
    <citation type="journal article" date="2006" name="Nature">
        <title>Human chromosome 11 DNA sequence and analysis including novel gene identification.</title>
        <authorList>
            <person name="Taylor T.D."/>
            <person name="Noguchi H."/>
            <person name="Totoki Y."/>
            <person name="Toyoda A."/>
            <person name="Kuroki Y."/>
            <person name="Dewar K."/>
            <person name="Lloyd C."/>
            <person name="Itoh T."/>
            <person name="Takeda T."/>
            <person name="Kim D.-W."/>
            <person name="She X."/>
            <person name="Barlow K.F."/>
            <person name="Bloom T."/>
            <person name="Bruford E."/>
            <person name="Chang J.L."/>
            <person name="Cuomo C.A."/>
            <person name="Eichler E."/>
            <person name="FitzGerald M.G."/>
            <person name="Jaffe D.B."/>
            <person name="LaButti K."/>
            <person name="Nicol R."/>
            <person name="Park H.-S."/>
            <person name="Seaman C."/>
            <person name="Sougnez C."/>
            <person name="Yang X."/>
            <person name="Zimmer A.R."/>
            <person name="Zody M.C."/>
            <person name="Birren B.W."/>
            <person name="Nusbaum C."/>
            <person name="Fujiyama A."/>
            <person name="Hattori M."/>
            <person name="Rogers J."/>
            <person name="Lander E.S."/>
            <person name="Sakaki Y."/>
        </authorList>
    </citation>
    <scope>NUCLEOTIDE SEQUENCE [LARGE SCALE GENOMIC DNA]</scope>
</reference>
<reference key="5">
    <citation type="submission" date="2005-03" db="EMBL/GenBank/DDBJ databases">
        <authorList>
            <person name="Totoki Y."/>
            <person name="Toyoda A."/>
            <person name="Takeda T."/>
            <person name="Sakaki Y."/>
            <person name="Tanaka A."/>
            <person name="Yokoyama S."/>
            <person name="Ohara O."/>
            <person name="Nagase T."/>
            <person name="Kikuno R.F."/>
        </authorList>
    </citation>
    <scope>NUCLEOTIDE SEQUENCE [LARGE SCALE MRNA] OF 1-542 (ISOFORM 1)</scope>
    <source>
        <tissue>Brain</tissue>
    </source>
</reference>
<reference key="6">
    <citation type="journal article" date="2004" name="J. Biol. Chem.">
        <title>An alternatively spliced isoform of PSD-93/chapsyn 110 binds to the inwardly rectifying potassium channel, Kir2.1.</title>
        <authorList>
            <person name="Leyland M.L."/>
            <person name="Dart C."/>
        </authorList>
    </citation>
    <scope>PARTIAL NUCLEOTIDE SEQUENCE [MRNA] (ISOFORM 4)</scope>
    <scope>INTERACTION WITH KCNJ2</scope>
</reference>
<reference key="7">
    <citation type="journal article" date="2006" name="Neuron">
        <title>SALM synaptic cell adhesion-like molecules regulate the differentiation of excitatory synapses.</title>
        <authorList>
            <person name="Ko J."/>
            <person name="Kim S."/>
            <person name="Chung H.S."/>
            <person name="Kim K."/>
            <person name="Han K."/>
            <person name="Kim H."/>
            <person name="Jun H."/>
            <person name="Kaang B.-K."/>
            <person name="Kim E."/>
        </authorList>
    </citation>
    <scope>INTERACTION WITH LRFN1; LRFN2 AND LRFN4</scope>
</reference>
<reference key="8">
    <citation type="journal article" date="2008" name="J. Neurosci.">
        <title>Preso, a novel PSD-95-interacting FERM and PDZ domain protein that regulates dendritic spine morphogenesis.</title>
        <authorList>
            <person name="Lee H.W."/>
            <person name="Choi J."/>
            <person name="Shin H."/>
            <person name="Kim K."/>
            <person name="Yang J."/>
            <person name="Na M."/>
            <person name="Choi S.Y."/>
            <person name="Kang G.B."/>
            <person name="Eom S.H."/>
            <person name="Kim H."/>
            <person name="Kim E."/>
        </authorList>
    </citation>
    <scope>INTERACTION WITH FRMPD4</scope>
</reference>
<reference key="9">
    <citation type="journal article" date="2009" name="BMC Immunol.">
        <title>Identification of SH3 domain interaction partners of human FasL (CD178) by phage display screening.</title>
        <authorList>
            <person name="Voss M."/>
            <person name="Lettau M."/>
            <person name="Janssen O."/>
        </authorList>
    </citation>
    <scope>INTERACTION WITH FASLG</scope>
</reference>
<reference key="10">
    <citation type="journal article" date="2011" name="Sci. Signal.">
        <title>System-wide temporal characterization of the proteome and phosphoproteome of human embryonic stem cell differentiation.</title>
        <authorList>
            <person name="Rigbolt K.T."/>
            <person name="Prokhorova T.A."/>
            <person name="Akimov V."/>
            <person name="Henningsen J."/>
            <person name="Johansen P.T."/>
            <person name="Kratchmarova I."/>
            <person name="Kassem M."/>
            <person name="Mann M."/>
            <person name="Olsen J.V."/>
            <person name="Blagoev B."/>
        </authorList>
    </citation>
    <scope>IDENTIFICATION BY MASS SPECTROMETRY [LARGE SCALE ANALYSIS]</scope>
</reference>
<reference key="11">
    <citation type="journal article" date="2013" name="J. Proteome Res.">
        <title>Toward a comprehensive characterization of a human cancer cell phosphoproteome.</title>
        <authorList>
            <person name="Zhou H."/>
            <person name="Di Palma S."/>
            <person name="Preisinger C."/>
            <person name="Peng M."/>
            <person name="Polat A.N."/>
            <person name="Heck A.J."/>
            <person name="Mohammed S."/>
        </authorList>
    </citation>
    <scope>PHOSPHORYLATION [LARGE SCALE ANALYSIS] AT SER-627 AND SER-635</scope>
    <scope>IDENTIFICATION BY MASS SPECTROMETRY [LARGE SCALE ANALYSIS]</scope>
    <source>
        <tissue>Cervix carcinoma</tissue>
    </source>
</reference>
<reference key="12">
    <citation type="journal article" date="2007" name="Protein Sci.">
        <title>Structure of PICK1 and other PDZ domains obtained with the help of self-binding C-terminal extensions.</title>
        <authorList>
            <person name="Elkins J.M."/>
            <person name="Papagrigoriou E."/>
            <person name="Berridge G."/>
            <person name="Yang X."/>
            <person name="Phillips C."/>
            <person name="Gileadi C."/>
            <person name="Savitsky P."/>
            <person name="Doyle D.A."/>
        </authorList>
    </citation>
    <scope>X-RAY CRYSTALLOGRAPHY (1.85 ANGSTROMS) OF 190-283</scope>
    <scope>X-RAY CRYSTALLOGRAPHY (1.5 ANGSTROMS) OF 418-513</scope>
</reference>
<name>DLG2_HUMAN</name>
<sequence>MFFACYCALRTNVKKYRYQDEDAPHDHSLPRLTHEVRGPELVHVSEKNLSQIENVHGYVLQSHISPLKASPAPIIVNTDTLDTIPYVNGTEIEYEFEEITLERGNSGLGFSIAGGTDNPHIGDDPGIFITKIIPGGAAAEDGRLRVNDCILRVNEVDVSEVSHSKAVEALKEAGSIVRLYVRRRRPILETVVEIKLFKGPKGLGFSIAGGVGNQHIPGDNSIYVTKIIDGGAAQKDGRLQVGDRLLMVNNYSLEEVTHEEAVAILKNTSEVVYLKVGKPTTIYMTDPYGPPDITHSYSPPMENHLLSGNNGTLEYKTSLPPISPGRYSPIPKHMLVDDDYTRPPEPVYSTVNKLCDKPASPRHYSPVECDKSFLLSAPYSHYHLGLLPDSEMTSHSQHSTATRQPSMTLQRAVSLEGEPRKVVLHKGSTGLGFNIVGGEDGEGIFVSFILAGGPADLSGELQRGDQILSVNGIDLRGASHEQAAAALKGAGQTVTIIAQYQPEDYARFEAKIHDLREQMMNHSMSSGSGSLRTNQKRSLYVRAMFDYDKSKDSGLPSQGLSFKYGDILHVINASDDEWWQARRVMLEGDSEEMGVIPSKRRVERKERARLKTVKFNAKPGVIDSKGSFNDKRKKSFIFSRKFPFYKNKEQSEQETSDPERGQEDLILSYEPVTRQEINYTRPVIILGPMKDRINDDLISEFPDKFGSCVPHTTRPKRDYEVDGRDYHFVISREQMEKDIQEHKFIEAGQYNDNLYGTSVQSVRFVAERGKHCILDVSGNAIKRLQVAQLYPIAIFIKPRSLEPLMEMNKRLTEEQAKKTYDRAIKLEQEFGEYFTAIVQGDTLEDIYNQCKLVIEEQSGPFIWIPSKEKL</sequence>
<gene>
    <name type="primary">DLG2</name>
</gene>
<accession>Q15700</accession>
<accession>B7WNY8</accession>
<accession>F8W9V6</accession>
<accession>Q59G57</accession>
<accession>Q5H9Q4</accession>
<accession>Q68CQ8</accession>
<accession>Q6ZTA8</accession>
<keyword id="KW-0002">3D-structure</keyword>
<keyword id="KW-0025">Alternative splicing</keyword>
<keyword id="KW-1003">Cell membrane</keyword>
<keyword id="KW-0966">Cell projection</keyword>
<keyword id="KW-0449">Lipoprotein</keyword>
<keyword id="KW-0472">Membrane</keyword>
<keyword id="KW-0564">Palmitate</keyword>
<keyword id="KW-0597">Phosphoprotein</keyword>
<keyword id="KW-1267">Proteomics identification</keyword>
<keyword id="KW-1185">Reference proteome</keyword>
<keyword id="KW-0677">Repeat</keyword>
<keyword id="KW-0728">SH3 domain</keyword>
<keyword id="KW-0770">Synapse</keyword>
<comment type="function">
    <text evidence="1">Required for perception of chronic pain through NMDA receptor signaling. Regulates surface expression of NMDA receptors in dorsal horn neurons of the spinal cord. Interacts with the cytoplasmic tail of NMDA receptor subunits as well as inward rectifying potassium channels. Involved in regulation of synaptic stability at cholinergic synapses. Part of the postsynaptic protein scaffold of excitatory synapses (By similarity).</text>
</comment>
<comment type="subunit">
    <text evidence="2 3 7 8 9 10">Interacts through its PDZ domains with NETO1 (By similarity). Interacts with NOS1/nNOS through second PDZ domain (By similarity). Interacts with KCNJ2/Kir2.1 (via C-terminus) through one of its PDZ domains (PubMed:15304517). Interacts with KCNJ4 (By similarity), Interacts with FRMPD4 (via C-terminus) (PubMed:19118189). Interacts with LRFN1, LRFN2 and LRFN4 (PubMed:16630835). Interacts with FASLG (PubMed:19807924). Interacts with KCNJ4 (By similarity). Interacts with ADAM22 (By similarity). Interacts with DGKI (via PDZ-binding motif) (By similarity).</text>
</comment>
<comment type="interaction">
    <interactant intactId="EBI-80426">
        <id>Q15700</id>
    </interactant>
    <interactant intactId="EBI-1222067">
        <id>P28039</id>
        <label>AOAH</label>
    </interactant>
    <organismsDiffer>false</organismsDiffer>
    <experiments>3</experiments>
</comment>
<comment type="interaction">
    <interactant intactId="EBI-80426">
        <id>Q15700</id>
    </interactant>
    <interactant intactId="EBI-11961832">
        <id>Q6IS01</id>
        <label>DLGAP1</label>
    </interactant>
    <organismsDiffer>false</organismsDiffer>
    <experiments>3</experiments>
</comment>
<comment type="interaction">
    <interactant intactId="EBI-80426">
        <id>Q15700</id>
    </interactant>
    <interactant intactId="EBI-12019838">
        <id>Q9P1A6-3</id>
        <label>DLGAP2</label>
    </interactant>
    <organismsDiffer>false</organismsDiffer>
    <experiments>3</experiments>
</comment>
<comment type="interaction">
    <interactant intactId="EBI-80426">
        <id>Q15700</id>
    </interactant>
    <interactant intactId="EBI-1752541">
        <id>O95886</id>
        <label>DLGAP3</label>
    </interactant>
    <organismsDiffer>false</organismsDiffer>
    <experiments>3</experiments>
</comment>
<comment type="interaction">
    <interactant intactId="EBI-80426">
        <id>Q15700</id>
    </interactant>
    <interactant intactId="EBI-19949317">
        <id>O60469</id>
        <label>DSCAM</label>
    </interactant>
    <organismsDiffer>false</organismsDiffer>
    <experiments>3</experiments>
</comment>
<comment type="interaction">
    <interactant intactId="EBI-80426">
        <id>Q15700</id>
    </interactant>
    <interactant intactId="EBI-11337888">
        <id>Q7L5A8</id>
        <label>FA2H</label>
    </interactant>
    <organismsDiffer>false</organismsDiffer>
    <experiments>3</experiments>
</comment>
<comment type="interaction">
    <interactant intactId="EBI-80426">
        <id>Q15700</id>
    </interactant>
    <interactant intactId="EBI-1043076">
        <id>P24390</id>
        <label>KDELR1</label>
    </interactant>
    <organismsDiffer>false</organismsDiffer>
    <experiments>3</experiments>
</comment>
<comment type="interaction">
    <interactant intactId="EBI-80426">
        <id>Q15700</id>
    </interactant>
    <interactant intactId="EBI-4401947">
        <id>Q9HB19</id>
        <label>PLEKHA2</label>
    </interactant>
    <organismsDiffer>false</organismsDiffer>
    <experiments>3</experiments>
</comment>
<comment type="interaction">
    <interactant intactId="EBI-80426">
        <id>Q15700</id>
    </interactant>
    <interactant intactId="EBI-2513119">
        <id>Q8WUA2</id>
        <label>PPIL4</label>
    </interactant>
    <organismsDiffer>false</organismsDiffer>
    <experiments>3</experiments>
</comment>
<comment type="interaction">
    <interactant intactId="EBI-80426">
        <id>Q15700</id>
    </interactant>
    <interactant intactId="EBI-12286629">
        <id>P10153</id>
        <label>RNASE2</label>
    </interactant>
    <organismsDiffer>false</organismsDiffer>
    <experiments>3</experiments>
</comment>
<comment type="interaction">
    <interactant intactId="EBI-80426">
        <id>Q15700</id>
    </interactant>
    <interactant intactId="EBI-1051960">
        <id>Q9H7B2</id>
        <label>RPF2</label>
    </interactant>
    <organismsDiffer>false</organismsDiffer>
    <experiments>3</experiments>
</comment>
<comment type="interaction">
    <interactant intactId="EBI-80426">
        <id>Q15700</id>
    </interactant>
    <interactant intactId="EBI-351811">
        <id>P62241</id>
        <label>RPS8</label>
    </interactant>
    <organismsDiffer>false</organismsDiffer>
    <experiments>3</experiments>
</comment>
<comment type="interaction">
    <interactant intactId="EBI-80426">
        <id>Q15700</id>
    </interactant>
    <interactant intactId="EBI-3048588">
        <id>Q9UIV8</id>
        <label>SERPINB13</label>
    </interactant>
    <organismsDiffer>false</organismsDiffer>
    <experiments>3</experiments>
</comment>
<comment type="interaction">
    <interactant intactId="EBI-80426">
        <id>Q15700</id>
    </interactant>
    <interactant intactId="EBI-1036653">
        <id>P04004</id>
        <label>VTN</label>
    </interactant>
    <organismsDiffer>false</organismsDiffer>
    <experiments>3</experiments>
</comment>
<comment type="interaction">
    <interactant intactId="EBI-663057">
        <id>Q15700-4</id>
    </interactant>
    <interactant intactId="EBI-703793">
        <id>P35561</id>
        <label>Kcnj2</label>
    </interactant>
    <organismsDiffer>true</organismsDiffer>
    <experiments>6</experiments>
</comment>
<comment type="subcellular location">
    <subcellularLocation>
        <location evidence="2">Cell membrane</location>
        <topology evidence="2">Lipid-anchor</topology>
    </subcellularLocation>
    <subcellularLocation>
        <location evidence="2">Postsynaptic density</location>
    </subcellularLocation>
    <subcellularLocation>
        <location evidence="1">Synapse</location>
    </subcellularLocation>
    <subcellularLocation>
        <location evidence="2">Membrane</location>
    </subcellularLocation>
    <subcellularLocation>
        <location evidence="2">Cell projection</location>
        <location evidence="2">Axon</location>
    </subcellularLocation>
    <subcellularLocation>
        <location evidence="2">Perikaryon</location>
    </subcellularLocation>
    <text evidence="2">Concentrated in soma and postsynaptic density of a subset of neurons.</text>
</comment>
<comment type="alternative products">
    <event type="alternative splicing"/>
    <isoform>
        <id>Q15700-1</id>
        <name>1</name>
        <name>PSD93-alpha</name>
        <sequence type="displayed"/>
    </isoform>
    <isoform>
        <id>Q15700-2</id>
        <name>2</name>
        <name>PSD93-beta</name>
        <sequence type="described" ref="VSP_015513"/>
    </isoform>
    <isoform>
        <id>Q15700-3</id>
        <name>3</name>
        <sequence type="described" ref="VSP_015512 VSP_015514 VSP_015515 VSP_015516"/>
    </isoform>
    <isoform>
        <id>Q15700-4</id>
        <name>4</name>
        <name>PSD93-delta</name>
        <sequence type="described" ref="VSP_015511"/>
    </isoform>
    <isoform>
        <id>Q15700-5</id>
        <name>5</name>
        <sequence type="described" ref="VSP_045634 VSP_015516"/>
    </isoform>
</comment>
<comment type="domain">
    <text>An N-terminally truncated L27 domain is predicted in isoform 2 at positions 1 through 27.</text>
</comment>
<comment type="PTM">
    <text evidence="1">Palmitoylation of isoform 1 is not required for targeting to postsynaptic density.</text>
</comment>
<comment type="similarity">
    <text evidence="13">Belongs to the MAGUK family.</text>
</comment>
<comment type="sequence caution" evidence="13">
    <conflict type="erroneous initiation">
        <sequence resource="EMBL-CDS" id="BAD92489"/>
    </conflict>
</comment>
<dbReference type="EMBL" id="U32376">
    <property type="protein sequence ID" value="AAB04949.1"/>
    <property type="molecule type" value="mRNA"/>
</dbReference>
<dbReference type="EMBL" id="AK126776">
    <property type="protein sequence ID" value="BAC86685.1"/>
    <property type="molecule type" value="mRNA"/>
</dbReference>
<dbReference type="EMBL" id="CR749820">
    <property type="protein sequence ID" value="CAH18680.1"/>
    <property type="molecule type" value="mRNA"/>
</dbReference>
<dbReference type="EMBL" id="CR933674">
    <property type="protein sequence ID" value="CAI45970.1"/>
    <property type="molecule type" value="mRNA"/>
</dbReference>
<dbReference type="EMBL" id="AC023118">
    <property type="status" value="NOT_ANNOTATED_CDS"/>
    <property type="molecule type" value="Genomic_DNA"/>
</dbReference>
<dbReference type="EMBL" id="AP000639">
    <property type="status" value="NOT_ANNOTATED_CDS"/>
    <property type="molecule type" value="Genomic_DNA"/>
</dbReference>
<dbReference type="EMBL" id="AP000642">
    <property type="status" value="NOT_ANNOTATED_CDS"/>
    <property type="molecule type" value="Genomic_DNA"/>
</dbReference>
<dbReference type="EMBL" id="AP000773">
    <property type="status" value="NOT_ANNOTATED_CDS"/>
    <property type="molecule type" value="Genomic_DNA"/>
</dbReference>
<dbReference type="EMBL" id="AP000852">
    <property type="status" value="NOT_ANNOTATED_CDS"/>
    <property type="molecule type" value="Genomic_DNA"/>
</dbReference>
<dbReference type="EMBL" id="AP000857">
    <property type="status" value="NOT_ANNOTATED_CDS"/>
    <property type="molecule type" value="Genomic_DNA"/>
</dbReference>
<dbReference type="EMBL" id="AP001791">
    <property type="status" value="NOT_ANNOTATED_CDS"/>
    <property type="molecule type" value="Genomic_DNA"/>
</dbReference>
<dbReference type="EMBL" id="AP001825">
    <property type="status" value="NOT_ANNOTATED_CDS"/>
    <property type="molecule type" value="Genomic_DNA"/>
</dbReference>
<dbReference type="EMBL" id="AP001984">
    <property type="status" value="NOT_ANNOTATED_CDS"/>
    <property type="molecule type" value="Genomic_DNA"/>
</dbReference>
<dbReference type="EMBL" id="AP002370">
    <property type="status" value="NOT_ANNOTATED_CDS"/>
    <property type="molecule type" value="Genomic_DNA"/>
</dbReference>
<dbReference type="EMBL" id="AP002751">
    <property type="status" value="NOT_ANNOTATED_CDS"/>
    <property type="molecule type" value="Genomic_DNA"/>
</dbReference>
<dbReference type="EMBL" id="AP002797">
    <property type="status" value="NOT_ANNOTATED_CDS"/>
    <property type="molecule type" value="Genomic_DNA"/>
</dbReference>
<dbReference type="EMBL" id="AP002803">
    <property type="status" value="NOT_ANNOTATED_CDS"/>
    <property type="molecule type" value="Genomic_DNA"/>
</dbReference>
<dbReference type="EMBL" id="AP002878">
    <property type="status" value="NOT_ANNOTATED_CDS"/>
    <property type="molecule type" value="Genomic_DNA"/>
</dbReference>
<dbReference type="EMBL" id="AP003026">
    <property type="status" value="NOT_ANNOTATED_CDS"/>
    <property type="molecule type" value="Genomic_DNA"/>
</dbReference>
<dbReference type="EMBL" id="AP003035">
    <property type="status" value="NOT_ANNOTATED_CDS"/>
    <property type="molecule type" value="Genomic_DNA"/>
</dbReference>
<dbReference type="EMBL" id="AP003093">
    <property type="status" value="NOT_ANNOTATED_CDS"/>
    <property type="molecule type" value="Genomic_DNA"/>
</dbReference>
<dbReference type="EMBL" id="AP003095">
    <property type="status" value="NOT_ANNOTATED_CDS"/>
    <property type="molecule type" value="Genomic_DNA"/>
</dbReference>
<dbReference type="EMBL" id="AP003305">
    <property type="status" value="NOT_ANNOTATED_CDS"/>
    <property type="molecule type" value="Genomic_DNA"/>
</dbReference>
<dbReference type="EMBL" id="AB209252">
    <property type="protein sequence ID" value="BAD92489.1"/>
    <property type="status" value="ALT_INIT"/>
    <property type="molecule type" value="mRNA"/>
</dbReference>
<dbReference type="CCDS" id="CCDS41696.1">
    <molecule id="Q15700-1"/>
</dbReference>
<dbReference type="CCDS" id="CCDS44690.1">
    <molecule id="Q15700-2"/>
</dbReference>
<dbReference type="CCDS" id="CCDS44691.1">
    <molecule id="Q15700-3"/>
</dbReference>
<dbReference type="CCDS" id="CCDS44692.1">
    <molecule id="Q15700-5"/>
</dbReference>
<dbReference type="CCDS" id="CCDS55782.1">
    <molecule id="Q15700-4"/>
</dbReference>
<dbReference type="PIR" id="G01974">
    <property type="entry name" value="G01974"/>
</dbReference>
<dbReference type="PIR" id="S60315">
    <property type="entry name" value="S60315"/>
</dbReference>
<dbReference type="RefSeq" id="NP_001136171.1">
    <molecule id="Q15700-2"/>
    <property type="nucleotide sequence ID" value="NM_001142699.3"/>
</dbReference>
<dbReference type="RefSeq" id="NP_001136172.1">
    <molecule id="Q15700-3"/>
    <property type="nucleotide sequence ID" value="NM_001142700.2"/>
</dbReference>
<dbReference type="RefSeq" id="NP_001136174.1">
    <molecule id="Q15700-5"/>
    <property type="nucleotide sequence ID" value="NM_001142702.2"/>
</dbReference>
<dbReference type="RefSeq" id="NP_001193698.1">
    <molecule id="Q15700-4"/>
    <property type="nucleotide sequence ID" value="NM_001206769.2"/>
</dbReference>
<dbReference type="RefSeq" id="NP_001355.2">
    <molecule id="Q15700-1"/>
    <property type="nucleotide sequence ID" value="NM_001364.3"/>
</dbReference>
<dbReference type="PDB" id="2BYG">
    <property type="method" value="X-ray"/>
    <property type="resolution" value="1.85 A"/>
    <property type="chains" value="A=190-283"/>
</dbReference>
<dbReference type="PDB" id="2HE2">
    <property type="method" value="X-ray"/>
    <property type="resolution" value="1.50 A"/>
    <property type="chains" value="A/B=418-513"/>
</dbReference>
<dbReference type="PDBsum" id="2BYG"/>
<dbReference type="PDBsum" id="2HE2"/>
<dbReference type="SMR" id="Q15700"/>
<dbReference type="BioGRID" id="108084">
    <property type="interactions" value="45"/>
</dbReference>
<dbReference type="ComplexPortal" id="CPX-6184">
    <property type="entry name" value="Scribble cell polarity complex, DLG2-LLGL2-SCRIB variant"/>
</dbReference>
<dbReference type="ComplexPortal" id="CPX-6191">
    <property type="entry name" value="Scribble cell polarity complex, DLG2-LLGL1-SCRIB variant"/>
</dbReference>
<dbReference type="ELM" id="Q15700"/>
<dbReference type="FunCoup" id="Q15700">
    <property type="interactions" value="1247"/>
</dbReference>
<dbReference type="IntAct" id="Q15700">
    <property type="interactions" value="30"/>
</dbReference>
<dbReference type="MINT" id="Q15700"/>
<dbReference type="STRING" id="9606.ENSP00000365272"/>
<dbReference type="GlyGen" id="Q15700">
    <property type="glycosylation" value="1 site, 1 O-linked glycan (1 site)"/>
</dbReference>
<dbReference type="iPTMnet" id="Q15700"/>
<dbReference type="PhosphoSitePlus" id="Q15700"/>
<dbReference type="SwissPalm" id="Q15700"/>
<dbReference type="BioMuta" id="DLG2"/>
<dbReference type="DMDM" id="215274165"/>
<dbReference type="jPOST" id="Q15700"/>
<dbReference type="MassIVE" id="Q15700"/>
<dbReference type="PaxDb" id="9606-ENSP00000365272"/>
<dbReference type="PeptideAtlas" id="Q15700"/>
<dbReference type="ProteomicsDB" id="30388"/>
<dbReference type="ProteomicsDB" id="60709">
    <molecule id="Q15700-1"/>
</dbReference>
<dbReference type="ProteomicsDB" id="60710">
    <molecule id="Q15700-2"/>
</dbReference>
<dbReference type="ProteomicsDB" id="60711">
    <molecule id="Q15700-3"/>
</dbReference>
<dbReference type="ProteomicsDB" id="60712">
    <molecule id="Q15700-4"/>
</dbReference>
<dbReference type="ABCD" id="Q15700">
    <property type="antibodies" value="2 sequenced antibodies"/>
</dbReference>
<dbReference type="Antibodypedia" id="8247">
    <property type="antibodies" value="337 antibodies from 36 providers"/>
</dbReference>
<dbReference type="DNASU" id="1740"/>
<dbReference type="Ensembl" id="ENST00000280241.12">
    <molecule id="Q15700-4"/>
    <property type="protein sequence ID" value="ENSP00000280241.8"/>
    <property type="gene ID" value="ENSG00000150672.19"/>
</dbReference>
<dbReference type="Ensembl" id="ENST00000376104.7">
    <molecule id="Q15700-2"/>
    <property type="protein sequence ID" value="ENSP00000365272.2"/>
    <property type="gene ID" value="ENSG00000150672.19"/>
</dbReference>
<dbReference type="Ensembl" id="ENST00000398309.6">
    <molecule id="Q15700-1"/>
    <property type="protein sequence ID" value="ENSP00000381355.2"/>
    <property type="gene ID" value="ENSG00000150672.19"/>
</dbReference>
<dbReference type="Ensembl" id="ENST00000418306.6">
    <molecule id="Q15700-3"/>
    <property type="protein sequence ID" value="ENSP00000402275.2"/>
    <property type="gene ID" value="ENSG00000150672.19"/>
</dbReference>
<dbReference type="Ensembl" id="ENST00000426717.6">
    <molecule id="Q15700-5"/>
    <property type="protein sequence ID" value="ENSP00000393049.2"/>
    <property type="gene ID" value="ENSG00000150672.19"/>
</dbReference>
<dbReference type="GeneID" id="1740"/>
<dbReference type="KEGG" id="hsa:1740"/>
<dbReference type="MANE-Select" id="ENST00000376104.7">
    <molecule id="Q15700-2"/>
    <property type="protein sequence ID" value="ENSP00000365272.2"/>
    <property type="RefSeq nucleotide sequence ID" value="NM_001142699.3"/>
    <property type="RefSeq protein sequence ID" value="NP_001136171.1"/>
</dbReference>
<dbReference type="UCSC" id="uc001pai.3">
    <molecule id="Q15700-1"/>
    <property type="organism name" value="human"/>
</dbReference>
<dbReference type="AGR" id="HGNC:2901"/>
<dbReference type="CTD" id="1740"/>
<dbReference type="DisGeNET" id="1740"/>
<dbReference type="GeneCards" id="DLG2"/>
<dbReference type="HGNC" id="HGNC:2901">
    <property type="gene designation" value="DLG2"/>
</dbReference>
<dbReference type="HPA" id="ENSG00000150672">
    <property type="expression patterns" value="Tissue enhanced (brain)"/>
</dbReference>
<dbReference type="MalaCards" id="DLG2"/>
<dbReference type="MIM" id="603583">
    <property type="type" value="gene"/>
</dbReference>
<dbReference type="neXtProt" id="NX_Q15700"/>
<dbReference type="OpenTargets" id="ENSG00000150672"/>
<dbReference type="PharmGKB" id="PA164741388"/>
<dbReference type="VEuPathDB" id="HostDB:ENSG00000150672"/>
<dbReference type="eggNOG" id="KOG0708">
    <property type="taxonomic scope" value="Eukaryota"/>
</dbReference>
<dbReference type="GeneTree" id="ENSGT00940000155156"/>
<dbReference type="HOGENOM" id="CLU_001715_4_1_1"/>
<dbReference type="InParanoid" id="Q15700"/>
<dbReference type="OMA" id="YGQFEAK"/>
<dbReference type="OrthoDB" id="9476421at2759"/>
<dbReference type="PAN-GO" id="Q15700">
    <property type="GO annotations" value="10 GO annotations based on evolutionary models"/>
</dbReference>
<dbReference type="PhylomeDB" id="Q15700"/>
<dbReference type="TreeFam" id="TF323171"/>
<dbReference type="PathwayCommons" id="Q15700"/>
<dbReference type="Reactome" id="R-HSA-438066">
    <property type="pathway name" value="Unblocking of NMDA receptors, glutamate binding and activation"/>
</dbReference>
<dbReference type="Reactome" id="R-HSA-442982">
    <property type="pathway name" value="Ras activation upon Ca2+ influx through NMDA receptor"/>
</dbReference>
<dbReference type="Reactome" id="R-HSA-5673001">
    <property type="pathway name" value="RAF/MAP kinase cascade"/>
</dbReference>
<dbReference type="Reactome" id="R-HSA-6794361">
    <property type="pathway name" value="Neurexins and neuroligins"/>
</dbReference>
<dbReference type="Reactome" id="R-HSA-9609736">
    <property type="pathway name" value="Assembly and cell surface presentation of NMDA receptors"/>
</dbReference>
<dbReference type="Reactome" id="R-HSA-9617324">
    <property type="pathway name" value="Negative regulation of NMDA receptor-mediated neuronal transmission"/>
</dbReference>
<dbReference type="Reactome" id="R-HSA-9620244">
    <property type="pathway name" value="Long-term potentiation"/>
</dbReference>
<dbReference type="SignaLink" id="Q15700"/>
<dbReference type="SIGNOR" id="Q15700"/>
<dbReference type="BioGRID-ORCS" id="1740">
    <property type="hits" value="7 hits in 1143 CRISPR screens"/>
</dbReference>
<dbReference type="CD-CODE" id="FB4E32DD">
    <property type="entry name" value="Presynaptic clusters and postsynaptic densities"/>
</dbReference>
<dbReference type="ChiTaRS" id="DLG2">
    <property type="organism name" value="human"/>
</dbReference>
<dbReference type="EvolutionaryTrace" id="Q15700"/>
<dbReference type="GeneWiki" id="DLG2"/>
<dbReference type="GenomeRNAi" id="1740"/>
<dbReference type="Pharos" id="Q15700">
    <property type="development level" value="Tbio"/>
</dbReference>
<dbReference type="PRO" id="PR:Q15700"/>
<dbReference type="Proteomes" id="UP000005640">
    <property type="component" value="Chromosome 11"/>
</dbReference>
<dbReference type="RNAct" id="Q15700">
    <property type="molecule type" value="protein"/>
</dbReference>
<dbReference type="Bgee" id="ENSG00000150672">
    <property type="expression patterns" value="Expressed in cortical plate and 135 other cell types or tissues"/>
</dbReference>
<dbReference type="ExpressionAtlas" id="Q15700">
    <property type="expression patterns" value="baseline and differential"/>
</dbReference>
<dbReference type="GO" id="GO:0005912">
    <property type="term" value="C:adherens junction"/>
    <property type="evidence" value="ECO:0000303"/>
    <property type="project" value="ComplexPortal"/>
</dbReference>
<dbReference type="GO" id="GO:1904115">
    <property type="term" value="C:axon cytoplasm"/>
    <property type="evidence" value="ECO:0007669"/>
    <property type="project" value="GOC"/>
</dbReference>
<dbReference type="GO" id="GO:0016323">
    <property type="term" value="C:basolateral plasma membrane"/>
    <property type="evidence" value="ECO:0000318"/>
    <property type="project" value="GO_Central"/>
</dbReference>
<dbReference type="GO" id="GO:0005829">
    <property type="term" value="C:cytosol"/>
    <property type="evidence" value="ECO:0000304"/>
    <property type="project" value="Reactome"/>
</dbReference>
<dbReference type="GO" id="GO:0044224">
    <property type="term" value="C:juxtaparanode region of axon"/>
    <property type="evidence" value="ECO:0000250"/>
    <property type="project" value="UniProtKB"/>
</dbReference>
<dbReference type="GO" id="GO:0016020">
    <property type="term" value="C:membrane"/>
    <property type="evidence" value="ECO:0000250"/>
    <property type="project" value="UniProtKB"/>
</dbReference>
<dbReference type="GO" id="GO:0031594">
    <property type="term" value="C:neuromuscular junction"/>
    <property type="evidence" value="ECO:0000318"/>
    <property type="project" value="GO_Central"/>
</dbReference>
<dbReference type="GO" id="GO:0043005">
    <property type="term" value="C:neuron projection"/>
    <property type="evidence" value="ECO:0000318"/>
    <property type="project" value="GO_Central"/>
</dbReference>
<dbReference type="GO" id="GO:0043204">
    <property type="term" value="C:perikaryon"/>
    <property type="evidence" value="ECO:0007669"/>
    <property type="project" value="UniProtKB-SubCell"/>
</dbReference>
<dbReference type="GO" id="GO:0005886">
    <property type="term" value="C:plasma membrane"/>
    <property type="evidence" value="ECO:0000304"/>
    <property type="project" value="Reactome"/>
</dbReference>
<dbReference type="GO" id="GO:0014069">
    <property type="term" value="C:postsynaptic density"/>
    <property type="evidence" value="ECO:0000250"/>
    <property type="project" value="ARUK-UCL"/>
</dbReference>
<dbReference type="GO" id="GO:0098839">
    <property type="term" value="C:postsynaptic density membrane"/>
    <property type="evidence" value="ECO:0000318"/>
    <property type="project" value="GO_Central"/>
</dbReference>
<dbReference type="GO" id="GO:0004385">
    <property type="term" value="F:guanylate kinase activity"/>
    <property type="evidence" value="ECO:0000304"/>
    <property type="project" value="ProtInc"/>
</dbReference>
<dbReference type="GO" id="GO:0035255">
    <property type="term" value="F:ionotropic glutamate receptor binding"/>
    <property type="evidence" value="ECO:0000318"/>
    <property type="project" value="GO_Central"/>
</dbReference>
<dbReference type="GO" id="GO:0019900">
    <property type="term" value="F:kinase binding"/>
    <property type="evidence" value="ECO:0000314"/>
    <property type="project" value="MGI"/>
</dbReference>
<dbReference type="GO" id="GO:0019901">
    <property type="term" value="F:protein kinase binding"/>
    <property type="evidence" value="ECO:0000318"/>
    <property type="project" value="GO_Central"/>
</dbReference>
<dbReference type="GO" id="GO:0099641">
    <property type="term" value="P:anterograde axonal protein transport"/>
    <property type="evidence" value="ECO:0000250"/>
    <property type="project" value="ARUK-UCL"/>
</dbReference>
<dbReference type="GO" id="GO:0098609">
    <property type="term" value="P:cell-cell adhesion"/>
    <property type="evidence" value="ECO:0000318"/>
    <property type="project" value="GO_Central"/>
</dbReference>
<dbReference type="GO" id="GO:0035865">
    <property type="term" value="P:cellular response to potassium ion"/>
    <property type="evidence" value="ECO:0000250"/>
    <property type="project" value="ARUK-UCL"/>
</dbReference>
<dbReference type="GO" id="GO:0007268">
    <property type="term" value="P:chemical synaptic transmission"/>
    <property type="evidence" value="ECO:0000318"/>
    <property type="project" value="GO_Central"/>
</dbReference>
<dbReference type="GO" id="GO:0045197">
    <property type="term" value="P:establishment or maintenance of epithelial cell apical/basal polarity"/>
    <property type="evidence" value="ECO:0000318"/>
    <property type="project" value="GO_Central"/>
</dbReference>
<dbReference type="GO" id="GO:0007399">
    <property type="term" value="P:nervous system development"/>
    <property type="evidence" value="ECO:0000318"/>
    <property type="project" value="GO_Central"/>
</dbReference>
<dbReference type="GO" id="GO:0035418">
    <property type="term" value="P:protein localization to synapse"/>
    <property type="evidence" value="ECO:0000318"/>
    <property type="project" value="GO_Central"/>
</dbReference>
<dbReference type="GO" id="GO:0043113">
    <property type="term" value="P:receptor clustering"/>
    <property type="evidence" value="ECO:0000318"/>
    <property type="project" value="GO_Central"/>
</dbReference>
<dbReference type="GO" id="GO:0097120">
    <property type="term" value="P:receptor localization to synapse"/>
    <property type="evidence" value="ECO:0000318"/>
    <property type="project" value="GO_Central"/>
</dbReference>
<dbReference type="GO" id="GO:0099072">
    <property type="term" value="P:regulation of postsynaptic membrane neurotransmitter receptor levels"/>
    <property type="evidence" value="ECO:0000318"/>
    <property type="project" value="GO_Central"/>
</dbReference>
<dbReference type="GO" id="GO:0099642">
    <property type="term" value="P:retrograde axonal protein transport"/>
    <property type="evidence" value="ECO:0000250"/>
    <property type="project" value="ARUK-UCL"/>
</dbReference>
<dbReference type="CDD" id="cd00071">
    <property type="entry name" value="GMPK"/>
    <property type="match status" value="1"/>
</dbReference>
<dbReference type="CDD" id="cd06723">
    <property type="entry name" value="PDZ1_Dlg1-2-4-like"/>
    <property type="match status" value="1"/>
</dbReference>
<dbReference type="CDD" id="cd06724">
    <property type="entry name" value="PDZ2_Dlg1-2-4-like"/>
    <property type="match status" value="1"/>
</dbReference>
<dbReference type="CDD" id="cd06795">
    <property type="entry name" value="PDZ3_Dlg1-2-4-like"/>
    <property type="match status" value="1"/>
</dbReference>
<dbReference type="CDD" id="cd12032">
    <property type="entry name" value="SH3_DLG2"/>
    <property type="match status" value="1"/>
</dbReference>
<dbReference type="FunFam" id="3.40.50.300:FF:001402">
    <property type="entry name" value="Discs, large homolog 3 (Drosophila)"/>
    <property type="match status" value="1"/>
</dbReference>
<dbReference type="FunFam" id="2.30.30.40:FF:000008">
    <property type="entry name" value="Disks large homolog 1 isoform 2"/>
    <property type="match status" value="1"/>
</dbReference>
<dbReference type="FunFam" id="2.30.42.10:FF:000001">
    <property type="entry name" value="Disks large homolog 1 isoform 2"/>
    <property type="match status" value="1"/>
</dbReference>
<dbReference type="FunFam" id="3.30.63.10:FF:000001">
    <property type="entry name" value="Disks large homolog 1 isoform 2"/>
    <property type="match status" value="1"/>
</dbReference>
<dbReference type="FunFam" id="2.30.42.10:FF:000091">
    <property type="entry name" value="disks large homolog 1 isoform X8"/>
    <property type="match status" value="1"/>
</dbReference>
<dbReference type="FunFam" id="2.30.30.40:FF:000027">
    <property type="entry name" value="Disks large homolog 3 isoform 1"/>
    <property type="match status" value="1"/>
</dbReference>
<dbReference type="FunFam" id="2.30.42.10:FF:000002">
    <property type="entry name" value="Disks large homolog 4 isoform 2"/>
    <property type="match status" value="1"/>
</dbReference>
<dbReference type="Gene3D" id="2.30.42.10">
    <property type="match status" value="3"/>
</dbReference>
<dbReference type="Gene3D" id="3.30.63.10">
    <property type="entry name" value="Guanylate Kinase phosphate binding domain"/>
    <property type="match status" value="1"/>
</dbReference>
<dbReference type="Gene3D" id="3.40.50.300">
    <property type="entry name" value="P-loop containing nucleotide triphosphate hydrolases"/>
    <property type="match status" value="1"/>
</dbReference>
<dbReference type="Gene3D" id="2.30.30.40">
    <property type="entry name" value="SH3 Domains"/>
    <property type="match status" value="2"/>
</dbReference>
<dbReference type="InterPro" id="IPR019583">
    <property type="entry name" value="DLG1-4_PDZ_assoc"/>
</dbReference>
<dbReference type="InterPro" id="IPR016313">
    <property type="entry name" value="DLG1-like"/>
</dbReference>
<dbReference type="InterPro" id="IPR019590">
    <property type="entry name" value="DLG1_PEST_dom"/>
</dbReference>
<dbReference type="InterPro" id="IPR035759">
    <property type="entry name" value="DLG2_SH3"/>
</dbReference>
<dbReference type="InterPro" id="IPR008145">
    <property type="entry name" value="GK/Ca_channel_bsu"/>
</dbReference>
<dbReference type="InterPro" id="IPR008144">
    <property type="entry name" value="Guanylate_kin-like_dom"/>
</dbReference>
<dbReference type="InterPro" id="IPR020590">
    <property type="entry name" value="Guanylate_kinase_CS"/>
</dbReference>
<dbReference type="InterPro" id="IPR027417">
    <property type="entry name" value="P-loop_NTPase"/>
</dbReference>
<dbReference type="InterPro" id="IPR001478">
    <property type="entry name" value="PDZ"/>
</dbReference>
<dbReference type="InterPro" id="IPR036034">
    <property type="entry name" value="PDZ_sf"/>
</dbReference>
<dbReference type="InterPro" id="IPR036028">
    <property type="entry name" value="SH3-like_dom_sf"/>
</dbReference>
<dbReference type="InterPro" id="IPR001452">
    <property type="entry name" value="SH3_domain"/>
</dbReference>
<dbReference type="InterPro" id="IPR050614">
    <property type="entry name" value="Synaptic_Scaffolding_LAP-MAGUK"/>
</dbReference>
<dbReference type="PANTHER" id="PTHR23119">
    <property type="entry name" value="DISCS LARGE"/>
    <property type="match status" value="1"/>
</dbReference>
<dbReference type="PANTHER" id="PTHR23119:SF6">
    <property type="entry name" value="DISKS LARGE HOMOLOG 2"/>
    <property type="match status" value="1"/>
</dbReference>
<dbReference type="Pfam" id="PF00625">
    <property type="entry name" value="Guanylate_kin"/>
    <property type="match status" value="1"/>
</dbReference>
<dbReference type="Pfam" id="PF10608">
    <property type="entry name" value="MAGUK_N_PEST"/>
    <property type="match status" value="1"/>
</dbReference>
<dbReference type="Pfam" id="PF00595">
    <property type="entry name" value="PDZ"/>
    <property type="match status" value="3"/>
</dbReference>
<dbReference type="Pfam" id="PF10600">
    <property type="entry name" value="PDZ_assoc"/>
    <property type="match status" value="1"/>
</dbReference>
<dbReference type="Pfam" id="PF00018">
    <property type="entry name" value="SH3_1"/>
    <property type="match status" value="1"/>
</dbReference>
<dbReference type="PIRSF" id="PIRSF001741">
    <property type="entry name" value="MAGUK_DLGH"/>
    <property type="match status" value="1"/>
</dbReference>
<dbReference type="SMART" id="SM00072">
    <property type="entry name" value="GuKc"/>
    <property type="match status" value="1"/>
</dbReference>
<dbReference type="SMART" id="SM01277">
    <property type="entry name" value="MAGUK_N_PEST"/>
    <property type="match status" value="1"/>
</dbReference>
<dbReference type="SMART" id="SM00228">
    <property type="entry name" value="PDZ"/>
    <property type="match status" value="3"/>
</dbReference>
<dbReference type="SMART" id="SM00326">
    <property type="entry name" value="SH3"/>
    <property type="match status" value="1"/>
</dbReference>
<dbReference type="SUPFAM" id="SSF52540">
    <property type="entry name" value="P-loop containing nucleoside triphosphate hydrolases"/>
    <property type="match status" value="1"/>
</dbReference>
<dbReference type="SUPFAM" id="SSF50156">
    <property type="entry name" value="PDZ domain-like"/>
    <property type="match status" value="3"/>
</dbReference>
<dbReference type="SUPFAM" id="SSF50044">
    <property type="entry name" value="SH3-domain"/>
    <property type="match status" value="1"/>
</dbReference>
<dbReference type="PROSITE" id="PS00856">
    <property type="entry name" value="GUANYLATE_KINASE_1"/>
    <property type="match status" value="1"/>
</dbReference>
<dbReference type="PROSITE" id="PS50052">
    <property type="entry name" value="GUANYLATE_KINASE_2"/>
    <property type="match status" value="1"/>
</dbReference>
<dbReference type="PROSITE" id="PS50106">
    <property type="entry name" value="PDZ"/>
    <property type="match status" value="3"/>
</dbReference>
<dbReference type="PROSITE" id="PS50002">
    <property type="entry name" value="SH3"/>
    <property type="match status" value="1"/>
</dbReference>
<evidence type="ECO:0000250" key="1"/>
<evidence type="ECO:0000250" key="2">
    <source>
        <dbReference type="UniProtKB" id="Q63622"/>
    </source>
</evidence>
<evidence type="ECO:0000250" key="3">
    <source>
        <dbReference type="UniProtKB" id="Q91XM9"/>
    </source>
</evidence>
<evidence type="ECO:0000255" key="4">
    <source>
        <dbReference type="PROSITE-ProRule" id="PRU00100"/>
    </source>
</evidence>
<evidence type="ECO:0000255" key="5">
    <source>
        <dbReference type="PROSITE-ProRule" id="PRU00143"/>
    </source>
</evidence>
<evidence type="ECO:0000255" key="6">
    <source>
        <dbReference type="PROSITE-ProRule" id="PRU00192"/>
    </source>
</evidence>
<evidence type="ECO:0000269" key="7">
    <source>
    </source>
</evidence>
<evidence type="ECO:0000269" key="8">
    <source>
    </source>
</evidence>
<evidence type="ECO:0000269" key="9">
    <source>
    </source>
</evidence>
<evidence type="ECO:0000269" key="10">
    <source>
    </source>
</evidence>
<evidence type="ECO:0000303" key="11">
    <source>
    </source>
</evidence>
<evidence type="ECO:0000303" key="12">
    <source>
    </source>
</evidence>
<evidence type="ECO:0000305" key="13"/>
<evidence type="ECO:0007744" key="14">
    <source>
    </source>
</evidence>
<evidence type="ECO:0007829" key="15">
    <source>
        <dbReference type="PDB" id="2BYG"/>
    </source>
</evidence>
<evidence type="ECO:0007829" key="16">
    <source>
        <dbReference type="PDB" id="2HE2"/>
    </source>
</evidence>
<proteinExistence type="evidence at protein level"/>